<organism>
    <name type="scientific">Ethmostigmus rubripes</name>
    <name type="common">Giant centipede</name>
    <dbReference type="NCBI Taxonomy" id="62613"/>
    <lineage>
        <taxon>Eukaryota</taxon>
        <taxon>Metazoa</taxon>
        <taxon>Ecdysozoa</taxon>
        <taxon>Arthropoda</taxon>
        <taxon>Myriapoda</taxon>
        <taxon>Chilopoda</taxon>
        <taxon>Pleurostigmophora</taxon>
        <taxon>Scolopendromorpha</taxon>
        <taxon>Scolopendridae</taxon>
        <taxon>Ethmostigmus</taxon>
    </lineage>
</organism>
<proteinExistence type="inferred from homology"/>
<reference key="1">
    <citation type="journal article" date="2014" name="Mol. Biol. Evol.">
        <title>Clawing through evolution: toxin diversification and convergence in the ancient lineage Chilopoda (centipedes).</title>
        <authorList>
            <person name="Undheim E.A."/>
            <person name="Jones A."/>
            <person name="Clauser K.R."/>
            <person name="Holland J.W."/>
            <person name="Pineda S.S."/>
            <person name="King G.F."/>
            <person name="Fry B.G."/>
        </authorList>
    </citation>
    <scope>NUCLEOTIDE SEQUENCE [MRNA]</scope>
    <scope>NOMENCLATURE</scope>
    <source>
        <tissue>Venom gland</tissue>
    </source>
</reference>
<dbReference type="SMR" id="P0DQE7"/>
<dbReference type="GO" id="GO:0005576">
    <property type="term" value="C:extracellular region"/>
    <property type="evidence" value="ECO:0007669"/>
    <property type="project" value="UniProtKB-SubCell"/>
</dbReference>
<dbReference type="GO" id="GO:0008047">
    <property type="term" value="F:enzyme activator activity"/>
    <property type="evidence" value="ECO:0007669"/>
    <property type="project" value="InterPro"/>
</dbReference>
<dbReference type="GO" id="GO:0090729">
    <property type="term" value="F:toxin activity"/>
    <property type="evidence" value="ECO:0007669"/>
    <property type="project" value="UniProtKB-KW"/>
</dbReference>
<dbReference type="GO" id="GO:0007586">
    <property type="term" value="P:digestion"/>
    <property type="evidence" value="ECO:0007669"/>
    <property type="project" value="InterPro"/>
</dbReference>
<dbReference type="GO" id="GO:0016042">
    <property type="term" value="P:lipid catabolic process"/>
    <property type="evidence" value="ECO:0007669"/>
    <property type="project" value="InterPro"/>
</dbReference>
<dbReference type="Gene3D" id="2.10.80.10">
    <property type="entry name" value="Lipase, subunit A"/>
    <property type="match status" value="1"/>
</dbReference>
<dbReference type="InterPro" id="IPR001981">
    <property type="entry name" value="Colipase"/>
</dbReference>
<dbReference type="PROSITE" id="PS51342">
    <property type="entry name" value="COLIPASE_2"/>
    <property type="match status" value="1"/>
</dbReference>
<feature type="signal peptide" evidence="1">
    <location>
        <begin position="1"/>
        <end position="21"/>
    </location>
</feature>
<feature type="chain" id="PRO_0000446824" description="U-scoloptoxin(18)-Er1a" evidence="3">
    <location>
        <begin position="22"/>
        <end position="107"/>
    </location>
</feature>
<accession>P0DQE7</accession>
<keyword id="KW-1015">Disulfide bond</keyword>
<keyword id="KW-0964">Secreted</keyword>
<keyword id="KW-0732">Signal</keyword>
<keyword id="KW-0800">Toxin</keyword>
<sequence length="107" mass="11526">MQRFLCLVACSVVLLVLGIVADDEIGQVPEGGWTRGNKSNGERCKFNQHCHSKCCVLSERGKPRVCASKALEGESCNAGQIKGGYHARFCPCALGNGKCIKNICQLL</sequence>
<name>TXI1A_ETHRU</name>
<protein>
    <recommendedName>
        <fullName evidence="2">U-scoloptoxin(18)-Er1a</fullName>
        <shortName evidence="2">U-SLPTX(18)-Er1a</shortName>
    </recommendedName>
</protein>
<comment type="subcellular location">
    <subcellularLocation>
        <location evidence="4">Secreted</location>
    </subcellularLocation>
</comment>
<comment type="tissue specificity">
    <text evidence="4">Expressed by the venom gland.</text>
</comment>
<comment type="PTM">
    <text evidence="3">Contains 5 disulfide bonds.</text>
</comment>
<comment type="similarity">
    <text evidence="3">Belongs to the scoloptoxin-18 family.</text>
</comment>
<comment type="online information" name="National Center for Biotechnology Information (NCBI)">
    <link uri="https://www.ncbi.nlm.nih.gov/nuccore/GASI01000011"/>
</comment>
<evidence type="ECO:0000255" key="1"/>
<evidence type="ECO:0000303" key="2">
    <source>
    </source>
</evidence>
<evidence type="ECO:0000305" key="3"/>
<evidence type="ECO:0000305" key="4">
    <source>
    </source>
</evidence>